<protein>
    <recommendedName>
        <fullName evidence="1">Probable cytosol aminopeptidase</fullName>
        <ecNumber evidence="1">3.4.11.1</ecNumber>
    </recommendedName>
    <alternativeName>
        <fullName evidence="1">Leucine aminopeptidase</fullName>
        <shortName evidence="1">LAP</shortName>
        <ecNumber evidence="1">3.4.11.10</ecNumber>
    </alternativeName>
    <alternativeName>
        <fullName evidence="1">Leucyl aminopeptidase</fullName>
    </alternativeName>
</protein>
<evidence type="ECO:0000255" key="1">
    <source>
        <dbReference type="HAMAP-Rule" id="MF_00181"/>
    </source>
</evidence>
<name>AMPA_BURP0</name>
<accession>A3NSI1</accession>
<sequence>MDFSIKGCDWSKGTANGFLTGKSDCIVLGVFEAQTLSGAALDIDEATKGLVSRVIKAGDIDGKLGKTLFLHEVSGIGASRVLLVGLGRQDAFSQKAYGDAAKAAWRALLGTKVVQVTFTLAQLPVPERASDWGVRAAILALRNETYKFTQMKSKPDAGAPALKRVVFSVDPADDKAAKVAAKQAVALANGMDLTRDLGNLPGNVCTPTYLANTAKKIAKDWGLKVDVLGLKQIQALKMGSFLSVAKGSVEPPQFIVLQYRGAAAKAAPVVLVGKGITFDSGGISLKPGEGMDEMKYDMCGAGSVLGTMRAVAEMGLKVNVVAIVPTCENMPAGNANKPGDIVTSMKGLTIEVLNTDAEGRLILCDALTYAERFKPAAVIDVATLTGACIIALGHHNTGLFSKDDALAGELLDASREAGDPAWRLPLDDEYQDQLKSNFADLANIGGRPAGSVTAACFLSRFAENYPWAHLDIAGTAWKSGAAKGATGRPVPLLAQFLIDRAGA</sequence>
<reference key="1">
    <citation type="journal article" date="2010" name="Genome Biol. Evol.">
        <title>Continuing evolution of Burkholderia mallei through genome reduction and large-scale rearrangements.</title>
        <authorList>
            <person name="Losada L."/>
            <person name="Ronning C.M."/>
            <person name="DeShazer D."/>
            <person name="Woods D."/>
            <person name="Fedorova N."/>
            <person name="Kim H.S."/>
            <person name="Shabalina S.A."/>
            <person name="Pearson T.R."/>
            <person name="Brinkac L."/>
            <person name="Tan P."/>
            <person name="Nandi T."/>
            <person name="Crabtree J."/>
            <person name="Badger J."/>
            <person name="Beckstrom-Sternberg S."/>
            <person name="Saqib M."/>
            <person name="Schutzer S.E."/>
            <person name="Keim P."/>
            <person name="Nierman W.C."/>
        </authorList>
    </citation>
    <scope>NUCLEOTIDE SEQUENCE [LARGE SCALE GENOMIC DNA]</scope>
    <source>
        <strain>1106a</strain>
    </source>
</reference>
<organism>
    <name type="scientific">Burkholderia pseudomallei (strain 1106a)</name>
    <dbReference type="NCBI Taxonomy" id="357348"/>
    <lineage>
        <taxon>Bacteria</taxon>
        <taxon>Pseudomonadati</taxon>
        <taxon>Pseudomonadota</taxon>
        <taxon>Betaproteobacteria</taxon>
        <taxon>Burkholderiales</taxon>
        <taxon>Burkholderiaceae</taxon>
        <taxon>Burkholderia</taxon>
        <taxon>pseudomallei group</taxon>
    </lineage>
</organism>
<keyword id="KW-0031">Aminopeptidase</keyword>
<keyword id="KW-0963">Cytoplasm</keyword>
<keyword id="KW-0378">Hydrolase</keyword>
<keyword id="KW-0464">Manganese</keyword>
<keyword id="KW-0479">Metal-binding</keyword>
<keyword id="KW-0645">Protease</keyword>
<feature type="chain" id="PRO_1000019896" description="Probable cytosol aminopeptidase">
    <location>
        <begin position="1"/>
        <end position="503"/>
    </location>
</feature>
<feature type="active site" evidence="1">
    <location>
        <position position="286"/>
    </location>
</feature>
<feature type="active site" evidence="1">
    <location>
        <position position="360"/>
    </location>
</feature>
<feature type="binding site" evidence="1">
    <location>
        <position position="274"/>
    </location>
    <ligand>
        <name>Mn(2+)</name>
        <dbReference type="ChEBI" id="CHEBI:29035"/>
        <label>2</label>
    </ligand>
</feature>
<feature type="binding site" evidence="1">
    <location>
        <position position="279"/>
    </location>
    <ligand>
        <name>Mn(2+)</name>
        <dbReference type="ChEBI" id="CHEBI:29035"/>
        <label>1</label>
    </ligand>
</feature>
<feature type="binding site" evidence="1">
    <location>
        <position position="279"/>
    </location>
    <ligand>
        <name>Mn(2+)</name>
        <dbReference type="ChEBI" id="CHEBI:29035"/>
        <label>2</label>
    </ligand>
</feature>
<feature type="binding site" evidence="1">
    <location>
        <position position="297"/>
    </location>
    <ligand>
        <name>Mn(2+)</name>
        <dbReference type="ChEBI" id="CHEBI:29035"/>
        <label>2</label>
    </ligand>
</feature>
<feature type="binding site" evidence="1">
    <location>
        <position position="356"/>
    </location>
    <ligand>
        <name>Mn(2+)</name>
        <dbReference type="ChEBI" id="CHEBI:29035"/>
        <label>1</label>
    </ligand>
</feature>
<feature type="binding site" evidence="1">
    <location>
        <position position="358"/>
    </location>
    <ligand>
        <name>Mn(2+)</name>
        <dbReference type="ChEBI" id="CHEBI:29035"/>
        <label>1</label>
    </ligand>
</feature>
<feature type="binding site" evidence="1">
    <location>
        <position position="358"/>
    </location>
    <ligand>
        <name>Mn(2+)</name>
        <dbReference type="ChEBI" id="CHEBI:29035"/>
        <label>2</label>
    </ligand>
</feature>
<gene>
    <name evidence="1" type="primary">pepA</name>
    <name type="ordered locus">BURPS1106A_1022</name>
</gene>
<dbReference type="EC" id="3.4.11.1" evidence="1"/>
<dbReference type="EC" id="3.4.11.10" evidence="1"/>
<dbReference type="EMBL" id="CP000572">
    <property type="protein sequence ID" value="ABN89883.1"/>
    <property type="molecule type" value="Genomic_DNA"/>
</dbReference>
<dbReference type="RefSeq" id="WP_004522572.1">
    <property type="nucleotide sequence ID" value="NC_009076.1"/>
</dbReference>
<dbReference type="SMR" id="A3NSI1"/>
<dbReference type="MEROPS" id="M17.003"/>
<dbReference type="KEGG" id="bpl:BURPS1106A_1022"/>
<dbReference type="HOGENOM" id="CLU_013734_2_2_4"/>
<dbReference type="Proteomes" id="UP000006738">
    <property type="component" value="Chromosome I"/>
</dbReference>
<dbReference type="GO" id="GO:0005737">
    <property type="term" value="C:cytoplasm"/>
    <property type="evidence" value="ECO:0007669"/>
    <property type="project" value="UniProtKB-SubCell"/>
</dbReference>
<dbReference type="GO" id="GO:0030145">
    <property type="term" value="F:manganese ion binding"/>
    <property type="evidence" value="ECO:0007669"/>
    <property type="project" value="UniProtKB-UniRule"/>
</dbReference>
<dbReference type="GO" id="GO:0070006">
    <property type="term" value="F:metalloaminopeptidase activity"/>
    <property type="evidence" value="ECO:0007669"/>
    <property type="project" value="InterPro"/>
</dbReference>
<dbReference type="GO" id="GO:0006508">
    <property type="term" value="P:proteolysis"/>
    <property type="evidence" value="ECO:0007669"/>
    <property type="project" value="UniProtKB-KW"/>
</dbReference>
<dbReference type="CDD" id="cd00433">
    <property type="entry name" value="Peptidase_M17"/>
    <property type="match status" value="1"/>
</dbReference>
<dbReference type="FunFam" id="3.40.630.10:FF:000004">
    <property type="entry name" value="Probable cytosol aminopeptidase"/>
    <property type="match status" value="1"/>
</dbReference>
<dbReference type="Gene3D" id="3.40.220.10">
    <property type="entry name" value="Leucine Aminopeptidase, subunit E, domain 1"/>
    <property type="match status" value="1"/>
</dbReference>
<dbReference type="Gene3D" id="3.40.630.10">
    <property type="entry name" value="Zn peptidases"/>
    <property type="match status" value="1"/>
</dbReference>
<dbReference type="HAMAP" id="MF_00181">
    <property type="entry name" value="Cytosol_peptidase_M17"/>
    <property type="match status" value="1"/>
</dbReference>
<dbReference type="InterPro" id="IPR011356">
    <property type="entry name" value="Leucine_aapep/pepB"/>
</dbReference>
<dbReference type="InterPro" id="IPR043472">
    <property type="entry name" value="Macro_dom-like"/>
</dbReference>
<dbReference type="InterPro" id="IPR000819">
    <property type="entry name" value="Peptidase_M17_C"/>
</dbReference>
<dbReference type="InterPro" id="IPR023042">
    <property type="entry name" value="Peptidase_M17_leu_NH2_pept"/>
</dbReference>
<dbReference type="InterPro" id="IPR008283">
    <property type="entry name" value="Peptidase_M17_N"/>
</dbReference>
<dbReference type="NCBIfam" id="NF002073">
    <property type="entry name" value="PRK00913.1-2"/>
    <property type="match status" value="1"/>
</dbReference>
<dbReference type="NCBIfam" id="NF002074">
    <property type="entry name" value="PRK00913.1-4"/>
    <property type="match status" value="1"/>
</dbReference>
<dbReference type="NCBIfam" id="NF002077">
    <property type="entry name" value="PRK00913.2-4"/>
    <property type="match status" value="1"/>
</dbReference>
<dbReference type="NCBIfam" id="NF002083">
    <property type="entry name" value="PRK00913.3-5"/>
    <property type="match status" value="1"/>
</dbReference>
<dbReference type="PANTHER" id="PTHR11963:SF23">
    <property type="entry name" value="CYTOSOL AMINOPEPTIDASE"/>
    <property type="match status" value="1"/>
</dbReference>
<dbReference type="PANTHER" id="PTHR11963">
    <property type="entry name" value="LEUCINE AMINOPEPTIDASE-RELATED"/>
    <property type="match status" value="1"/>
</dbReference>
<dbReference type="Pfam" id="PF00883">
    <property type="entry name" value="Peptidase_M17"/>
    <property type="match status" value="1"/>
</dbReference>
<dbReference type="Pfam" id="PF02789">
    <property type="entry name" value="Peptidase_M17_N"/>
    <property type="match status" value="1"/>
</dbReference>
<dbReference type="PRINTS" id="PR00481">
    <property type="entry name" value="LAMNOPPTDASE"/>
</dbReference>
<dbReference type="SUPFAM" id="SSF52949">
    <property type="entry name" value="Macro domain-like"/>
    <property type="match status" value="1"/>
</dbReference>
<dbReference type="SUPFAM" id="SSF53187">
    <property type="entry name" value="Zn-dependent exopeptidases"/>
    <property type="match status" value="1"/>
</dbReference>
<dbReference type="PROSITE" id="PS00631">
    <property type="entry name" value="CYTOSOL_AP"/>
    <property type="match status" value="1"/>
</dbReference>
<comment type="function">
    <text evidence="1">Presumably involved in the processing and regular turnover of intracellular proteins. Catalyzes the removal of unsubstituted N-terminal amino acids from various peptides.</text>
</comment>
<comment type="catalytic activity">
    <reaction evidence="1">
        <text>Release of an N-terminal amino acid, Xaa-|-Yaa-, in which Xaa is preferably Leu, but may be other amino acids including Pro although not Arg or Lys, and Yaa may be Pro. Amino acid amides and methyl esters are also readily hydrolyzed, but rates on arylamides are exceedingly low.</text>
        <dbReference type="EC" id="3.4.11.1"/>
    </reaction>
</comment>
<comment type="catalytic activity">
    <reaction evidence="1">
        <text>Release of an N-terminal amino acid, preferentially leucine, but not glutamic or aspartic acids.</text>
        <dbReference type="EC" id="3.4.11.10"/>
    </reaction>
</comment>
<comment type="cofactor">
    <cofactor evidence="1">
        <name>Mn(2+)</name>
        <dbReference type="ChEBI" id="CHEBI:29035"/>
    </cofactor>
    <text evidence="1">Binds 2 manganese ions per subunit.</text>
</comment>
<comment type="subcellular location">
    <subcellularLocation>
        <location evidence="1">Cytoplasm</location>
    </subcellularLocation>
</comment>
<comment type="similarity">
    <text evidence="1">Belongs to the peptidase M17 family.</text>
</comment>
<proteinExistence type="inferred from homology"/>